<organism>
    <name type="scientific">Sodalis glossinidius (strain morsitans)</name>
    <dbReference type="NCBI Taxonomy" id="343509"/>
    <lineage>
        <taxon>Bacteria</taxon>
        <taxon>Pseudomonadati</taxon>
        <taxon>Pseudomonadota</taxon>
        <taxon>Gammaproteobacteria</taxon>
        <taxon>Enterobacterales</taxon>
        <taxon>Bruguierivoracaceae</taxon>
        <taxon>Sodalis</taxon>
    </lineage>
</organism>
<dbReference type="EMBL" id="AP008232">
    <property type="protein sequence ID" value="BAE74695.1"/>
    <property type="molecule type" value="Genomic_DNA"/>
</dbReference>
<dbReference type="RefSeq" id="WP_011411240.1">
    <property type="nucleotide sequence ID" value="NZ_LN854557.1"/>
</dbReference>
<dbReference type="SMR" id="Q2NT30"/>
<dbReference type="STRING" id="343509.SG1420"/>
<dbReference type="KEGG" id="sgl:SG1420"/>
<dbReference type="eggNOG" id="COG0291">
    <property type="taxonomic scope" value="Bacteria"/>
</dbReference>
<dbReference type="HOGENOM" id="CLU_169643_1_1_6"/>
<dbReference type="OrthoDB" id="47476at2"/>
<dbReference type="BioCyc" id="SGLO343509:SGP1_RS12600-MONOMER"/>
<dbReference type="Proteomes" id="UP000001932">
    <property type="component" value="Chromosome"/>
</dbReference>
<dbReference type="GO" id="GO:0022625">
    <property type="term" value="C:cytosolic large ribosomal subunit"/>
    <property type="evidence" value="ECO:0007669"/>
    <property type="project" value="TreeGrafter"/>
</dbReference>
<dbReference type="GO" id="GO:0003735">
    <property type="term" value="F:structural constituent of ribosome"/>
    <property type="evidence" value="ECO:0007669"/>
    <property type="project" value="InterPro"/>
</dbReference>
<dbReference type="GO" id="GO:0006412">
    <property type="term" value="P:translation"/>
    <property type="evidence" value="ECO:0007669"/>
    <property type="project" value="UniProtKB-UniRule"/>
</dbReference>
<dbReference type="FunFam" id="4.10.410.60:FF:000001">
    <property type="entry name" value="50S ribosomal protein L35"/>
    <property type="match status" value="1"/>
</dbReference>
<dbReference type="Gene3D" id="4.10.410.60">
    <property type="match status" value="1"/>
</dbReference>
<dbReference type="HAMAP" id="MF_00514">
    <property type="entry name" value="Ribosomal_bL35"/>
    <property type="match status" value="1"/>
</dbReference>
<dbReference type="InterPro" id="IPR001706">
    <property type="entry name" value="Ribosomal_bL35"/>
</dbReference>
<dbReference type="InterPro" id="IPR021137">
    <property type="entry name" value="Ribosomal_bL35-like"/>
</dbReference>
<dbReference type="InterPro" id="IPR018265">
    <property type="entry name" value="Ribosomal_bL35_CS"/>
</dbReference>
<dbReference type="InterPro" id="IPR037229">
    <property type="entry name" value="Ribosomal_bL35_sf"/>
</dbReference>
<dbReference type="NCBIfam" id="TIGR00001">
    <property type="entry name" value="rpmI_bact"/>
    <property type="match status" value="1"/>
</dbReference>
<dbReference type="PANTHER" id="PTHR33343">
    <property type="entry name" value="54S RIBOSOMAL PROTEIN BL35M"/>
    <property type="match status" value="1"/>
</dbReference>
<dbReference type="PANTHER" id="PTHR33343:SF1">
    <property type="entry name" value="LARGE RIBOSOMAL SUBUNIT PROTEIN BL35M"/>
    <property type="match status" value="1"/>
</dbReference>
<dbReference type="Pfam" id="PF01632">
    <property type="entry name" value="Ribosomal_L35p"/>
    <property type="match status" value="1"/>
</dbReference>
<dbReference type="PRINTS" id="PR00064">
    <property type="entry name" value="RIBOSOMALL35"/>
</dbReference>
<dbReference type="SUPFAM" id="SSF143034">
    <property type="entry name" value="L35p-like"/>
    <property type="match status" value="1"/>
</dbReference>
<dbReference type="PROSITE" id="PS00936">
    <property type="entry name" value="RIBOSOMAL_L35"/>
    <property type="match status" value="1"/>
</dbReference>
<reference key="1">
    <citation type="journal article" date="2006" name="Genome Res.">
        <title>Massive genome erosion and functional adaptations provide insights into the symbiotic lifestyle of Sodalis glossinidius in the tsetse host.</title>
        <authorList>
            <person name="Toh H."/>
            <person name="Weiss B.L."/>
            <person name="Perkin S.A.H."/>
            <person name="Yamashita A."/>
            <person name="Oshima K."/>
            <person name="Hattori M."/>
            <person name="Aksoy S."/>
        </authorList>
    </citation>
    <scope>NUCLEOTIDE SEQUENCE [LARGE SCALE GENOMIC DNA]</scope>
    <source>
        <strain>morsitans</strain>
    </source>
</reference>
<comment type="similarity">
    <text evidence="1">Belongs to the bacterial ribosomal protein bL35 family.</text>
</comment>
<protein>
    <recommendedName>
        <fullName evidence="1">Large ribosomal subunit protein bL35</fullName>
    </recommendedName>
    <alternativeName>
        <fullName evidence="2">50S ribosomal protein L35</fullName>
    </alternativeName>
</protein>
<sequence length="65" mass="7384">MPKIKTVRGAAKRFKKTASGGFKRKHANLRHILTKKSTKRKRHLRPKSMVSKGDLGLVVRCLPYA</sequence>
<gene>
    <name evidence="1" type="primary">rpmI</name>
    <name type="ordered locus">SG1420</name>
</gene>
<proteinExistence type="inferred from homology"/>
<evidence type="ECO:0000255" key="1">
    <source>
        <dbReference type="HAMAP-Rule" id="MF_00514"/>
    </source>
</evidence>
<evidence type="ECO:0000305" key="2"/>
<keyword id="KW-0687">Ribonucleoprotein</keyword>
<keyword id="KW-0689">Ribosomal protein</keyword>
<name>RL35_SODGM</name>
<accession>Q2NT30</accession>
<feature type="chain" id="PRO_0000258756" description="Large ribosomal subunit protein bL35">
    <location>
        <begin position="1"/>
        <end position="65"/>
    </location>
</feature>